<gene>
    <name evidence="1" type="primary">sucC</name>
    <name type="ordered locus">SAHV_1235</name>
</gene>
<protein>
    <recommendedName>
        <fullName evidence="1">Succinate--CoA ligase [ADP-forming] subunit beta</fullName>
        <ecNumber evidence="1">6.2.1.5</ecNumber>
    </recommendedName>
    <alternativeName>
        <fullName evidence="1">Succinyl-CoA synthetase subunit beta</fullName>
        <shortName evidence="1">SCS-beta</shortName>
    </alternativeName>
</protein>
<evidence type="ECO:0000255" key="1">
    <source>
        <dbReference type="HAMAP-Rule" id="MF_00558"/>
    </source>
</evidence>
<organism>
    <name type="scientific">Staphylococcus aureus (strain Mu3 / ATCC 700698)</name>
    <dbReference type="NCBI Taxonomy" id="418127"/>
    <lineage>
        <taxon>Bacteria</taxon>
        <taxon>Bacillati</taxon>
        <taxon>Bacillota</taxon>
        <taxon>Bacilli</taxon>
        <taxon>Bacillales</taxon>
        <taxon>Staphylococcaceae</taxon>
        <taxon>Staphylococcus</taxon>
    </lineage>
</organism>
<sequence length="388" mass="42056">MNIHEYQGKEIFRSMGVAVPEGRVAFTAEEAVEKAKELNSDVYVVKAQIHAGGRGKAGGVKIAKSLSEVETYAKELLGKTLVTHQTGPEGKEIKRLYIEEGCAIQKEYYVGFVIDRATDQVTLMASEEGGTEIEEVAAKTPEKIFKETIDPVIGLSPFQARRIAFNINIPKESVNKAAKFLLALYNVFIEKDCSIVEINPLVTTADGDVLALDAKINFDDNALFRHKDVVELRDLEEEDPKEIEASKHDLSYIALDGDIGCMVNGAGLAMATMDTINHFGGNPANFLDAGGSATREKVTEAFKIILGDENVKGIFVNIFGGIMKCDVIAEGIVEAVKEVDLTLPLVVRLEGTNVELGKKILKDSGLAIEPAATMAEGAQKIVKLVKEA</sequence>
<comment type="function">
    <text evidence="1">Succinyl-CoA synthetase functions in the citric acid cycle (TCA), coupling the hydrolysis of succinyl-CoA to the synthesis of either ATP or GTP and thus represents the only step of substrate-level phosphorylation in the TCA. The beta subunit provides nucleotide specificity of the enzyme and binds the substrate succinate, while the binding sites for coenzyme A and phosphate are found in the alpha subunit.</text>
</comment>
<comment type="catalytic activity">
    <reaction evidence="1">
        <text>succinate + ATP + CoA = succinyl-CoA + ADP + phosphate</text>
        <dbReference type="Rhea" id="RHEA:17661"/>
        <dbReference type="ChEBI" id="CHEBI:30031"/>
        <dbReference type="ChEBI" id="CHEBI:30616"/>
        <dbReference type="ChEBI" id="CHEBI:43474"/>
        <dbReference type="ChEBI" id="CHEBI:57287"/>
        <dbReference type="ChEBI" id="CHEBI:57292"/>
        <dbReference type="ChEBI" id="CHEBI:456216"/>
        <dbReference type="EC" id="6.2.1.5"/>
    </reaction>
    <physiologicalReaction direction="right-to-left" evidence="1">
        <dbReference type="Rhea" id="RHEA:17663"/>
    </physiologicalReaction>
</comment>
<comment type="catalytic activity">
    <reaction evidence="1">
        <text>GTP + succinate + CoA = succinyl-CoA + GDP + phosphate</text>
        <dbReference type="Rhea" id="RHEA:22120"/>
        <dbReference type="ChEBI" id="CHEBI:30031"/>
        <dbReference type="ChEBI" id="CHEBI:37565"/>
        <dbReference type="ChEBI" id="CHEBI:43474"/>
        <dbReference type="ChEBI" id="CHEBI:57287"/>
        <dbReference type="ChEBI" id="CHEBI:57292"/>
        <dbReference type="ChEBI" id="CHEBI:58189"/>
    </reaction>
    <physiologicalReaction direction="right-to-left" evidence="1">
        <dbReference type="Rhea" id="RHEA:22122"/>
    </physiologicalReaction>
</comment>
<comment type="cofactor">
    <cofactor evidence="1">
        <name>Mg(2+)</name>
        <dbReference type="ChEBI" id="CHEBI:18420"/>
    </cofactor>
    <text evidence="1">Binds 1 Mg(2+) ion per subunit.</text>
</comment>
<comment type="pathway">
    <text evidence="1">Carbohydrate metabolism; tricarboxylic acid cycle; succinate from succinyl-CoA (ligase route): step 1/1.</text>
</comment>
<comment type="subunit">
    <text evidence="1">Heterotetramer of two alpha and two beta subunits.</text>
</comment>
<comment type="similarity">
    <text evidence="1">Belongs to the succinate/malate CoA ligase beta subunit family.</text>
</comment>
<dbReference type="EC" id="6.2.1.5" evidence="1"/>
<dbReference type="EMBL" id="AP009324">
    <property type="protein sequence ID" value="BAF78118.1"/>
    <property type="molecule type" value="Genomic_DNA"/>
</dbReference>
<dbReference type="RefSeq" id="WP_001020801.1">
    <property type="nucleotide sequence ID" value="NZ_CTYB01000004.1"/>
</dbReference>
<dbReference type="SMR" id="A7X1L8"/>
<dbReference type="KEGG" id="saw:SAHV_1235"/>
<dbReference type="HOGENOM" id="CLU_037430_0_2_9"/>
<dbReference type="UniPathway" id="UPA00223">
    <property type="reaction ID" value="UER00999"/>
</dbReference>
<dbReference type="GO" id="GO:0005829">
    <property type="term" value="C:cytosol"/>
    <property type="evidence" value="ECO:0007669"/>
    <property type="project" value="TreeGrafter"/>
</dbReference>
<dbReference type="GO" id="GO:0042709">
    <property type="term" value="C:succinate-CoA ligase complex"/>
    <property type="evidence" value="ECO:0007669"/>
    <property type="project" value="TreeGrafter"/>
</dbReference>
<dbReference type="GO" id="GO:0005524">
    <property type="term" value="F:ATP binding"/>
    <property type="evidence" value="ECO:0007669"/>
    <property type="project" value="UniProtKB-UniRule"/>
</dbReference>
<dbReference type="GO" id="GO:0000287">
    <property type="term" value="F:magnesium ion binding"/>
    <property type="evidence" value="ECO:0007669"/>
    <property type="project" value="UniProtKB-UniRule"/>
</dbReference>
<dbReference type="GO" id="GO:0004775">
    <property type="term" value="F:succinate-CoA ligase (ADP-forming) activity"/>
    <property type="evidence" value="ECO:0007669"/>
    <property type="project" value="UniProtKB-UniRule"/>
</dbReference>
<dbReference type="GO" id="GO:0004776">
    <property type="term" value="F:succinate-CoA ligase (GDP-forming) activity"/>
    <property type="evidence" value="ECO:0007669"/>
    <property type="project" value="RHEA"/>
</dbReference>
<dbReference type="GO" id="GO:0006104">
    <property type="term" value="P:succinyl-CoA metabolic process"/>
    <property type="evidence" value="ECO:0007669"/>
    <property type="project" value="TreeGrafter"/>
</dbReference>
<dbReference type="GO" id="GO:0006099">
    <property type="term" value="P:tricarboxylic acid cycle"/>
    <property type="evidence" value="ECO:0007669"/>
    <property type="project" value="UniProtKB-UniRule"/>
</dbReference>
<dbReference type="FunFam" id="3.30.1490.20:FF:000002">
    <property type="entry name" value="Succinate--CoA ligase [ADP-forming] subunit beta"/>
    <property type="match status" value="1"/>
</dbReference>
<dbReference type="FunFam" id="3.30.470.20:FF:000002">
    <property type="entry name" value="Succinate--CoA ligase [ADP-forming] subunit beta"/>
    <property type="match status" value="1"/>
</dbReference>
<dbReference type="FunFam" id="3.40.50.261:FF:000001">
    <property type="entry name" value="Succinate--CoA ligase [ADP-forming] subunit beta"/>
    <property type="match status" value="1"/>
</dbReference>
<dbReference type="Gene3D" id="3.30.1490.20">
    <property type="entry name" value="ATP-grasp fold, A domain"/>
    <property type="match status" value="1"/>
</dbReference>
<dbReference type="Gene3D" id="3.30.470.20">
    <property type="entry name" value="ATP-grasp fold, B domain"/>
    <property type="match status" value="1"/>
</dbReference>
<dbReference type="Gene3D" id="3.40.50.261">
    <property type="entry name" value="Succinyl-CoA synthetase domains"/>
    <property type="match status" value="1"/>
</dbReference>
<dbReference type="HAMAP" id="MF_00558">
    <property type="entry name" value="Succ_CoA_beta"/>
    <property type="match status" value="1"/>
</dbReference>
<dbReference type="InterPro" id="IPR011761">
    <property type="entry name" value="ATP-grasp"/>
</dbReference>
<dbReference type="InterPro" id="IPR013650">
    <property type="entry name" value="ATP-grasp_succ-CoA_synth-type"/>
</dbReference>
<dbReference type="InterPro" id="IPR013815">
    <property type="entry name" value="ATP_grasp_subdomain_1"/>
</dbReference>
<dbReference type="InterPro" id="IPR017866">
    <property type="entry name" value="Succ-CoA_synthase_bsu_CS"/>
</dbReference>
<dbReference type="InterPro" id="IPR005811">
    <property type="entry name" value="SUCC_ACL_C"/>
</dbReference>
<dbReference type="InterPro" id="IPR005809">
    <property type="entry name" value="Succ_CoA_ligase-like_bsu"/>
</dbReference>
<dbReference type="InterPro" id="IPR016102">
    <property type="entry name" value="Succinyl-CoA_synth-like"/>
</dbReference>
<dbReference type="NCBIfam" id="NF001913">
    <property type="entry name" value="PRK00696.1"/>
    <property type="match status" value="1"/>
</dbReference>
<dbReference type="NCBIfam" id="TIGR01016">
    <property type="entry name" value="sucCoAbeta"/>
    <property type="match status" value="1"/>
</dbReference>
<dbReference type="PANTHER" id="PTHR11815:SF10">
    <property type="entry name" value="SUCCINATE--COA LIGASE [GDP-FORMING] SUBUNIT BETA, MITOCHONDRIAL"/>
    <property type="match status" value="1"/>
</dbReference>
<dbReference type="PANTHER" id="PTHR11815">
    <property type="entry name" value="SUCCINYL-COA SYNTHETASE BETA CHAIN"/>
    <property type="match status" value="1"/>
</dbReference>
<dbReference type="Pfam" id="PF08442">
    <property type="entry name" value="ATP-grasp_2"/>
    <property type="match status" value="1"/>
</dbReference>
<dbReference type="Pfam" id="PF00549">
    <property type="entry name" value="Ligase_CoA"/>
    <property type="match status" value="1"/>
</dbReference>
<dbReference type="PIRSF" id="PIRSF001554">
    <property type="entry name" value="SucCS_beta"/>
    <property type="match status" value="1"/>
</dbReference>
<dbReference type="SUPFAM" id="SSF56059">
    <property type="entry name" value="Glutathione synthetase ATP-binding domain-like"/>
    <property type="match status" value="1"/>
</dbReference>
<dbReference type="SUPFAM" id="SSF52210">
    <property type="entry name" value="Succinyl-CoA synthetase domains"/>
    <property type="match status" value="1"/>
</dbReference>
<dbReference type="PROSITE" id="PS50975">
    <property type="entry name" value="ATP_GRASP"/>
    <property type="match status" value="1"/>
</dbReference>
<dbReference type="PROSITE" id="PS01217">
    <property type="entry name" value="SUCCINYL_COA_LIG_3"/>
    <property type="match status" value="1"/>
</dbReference>
<name>SUCC_STAA1</name>
<proteinExistence type="inferred from homology"/>
<accession>A7X1L8</accession>
<keyword id="KW-0067">ATP-binding</keyword>
<keyword id="KW-0436">Ligase</keyword>
<keyword id="KW-0460">Magnesium</keyword>
<keyword id="KW-0479">Metal-binding</keyword>
<keyword id="KW-0547">Nucleotide-binding</keyword>
<keyword id="KW-0816">Tricarboxylic acid cycle</keyword>
<reference key="1">
    <citation type="journal article" date="2008" name="Antimicrob. Agents Chemother.">
        <title>Mutated response regulator graR is responsible for phenotypic conversion of Staphylococcus aureus from heterogeneous vancomycin-intermediate resistance to vancomycin-intermediate resistance.</title>
        <authorList>
            <person name="Neoh H.-M."/>
            <person name="Cui L."/>
            <person name="Yuzawa H."/>
            <person name="Takeuchi F."/>
            <person name="Matsuo M."/>
            <person name="Hiramatsu K."/>
        </authorList>
    </citation>
    <scope>NUCLEOTIDE SEQUENCE [LARGE SCALE GENOMIC DNA]</scope>
    <source>
        <strain>Mu3 / ATCC 700698</strain>
    </source>
</reference>
<feature type="chain" id="PRO_1000082241" description="Succinate--CoA ligase [ADP-forming] subunit beta">
    <location>
        <begin position="1"/>
        <end position="388"/>
    </location>
</feature>
<feature type="domain" description="ATP-grasp" evidence="1">
    <location>
        <begin position="9"/>
        <end position="244"/>
    </location>
</feature>
<feature type="binding site" evidence="1">
    <location>
        <position position="46"/>
    </location>
    <ligand>
        <name>ATP</name>
        <dbReference type="ChEBI" id="CHEBI:30616"/>
    </ligand>
</feature>
<feature type="binding site" evidence="1">
    <location>
        <begin position="53"/>
        <end position="55"/>
    </location>
    <ligand>
        <name>ATP</name>
        <dbReference type="ChEBI" id="CHEBI:30616"/>
    </ligand>
</feature>
<feature type="binding site" evidence="1">
    <location>
        <position position="99"/>
    </location>
    <ligand>
        <name>ATP</name>
        <dbReference type="ChEBI" id="CHEBI:30616"/>
    </ligand>
</feature>
<feature type="binding site" evidence="1">
    <location>
        <position position="102"/>
    </location>
    <ligand>
        <name>ATP</name>
        <dbReference type="ChEBI" id="CHEBI:30616"/>
    </ligand>
</feature>
<feature type="binding site" evidence="1">
    <location>
        <position position="107"/>
    </location>
    <ligand>
        <name>ATP</name>
        <dbReference type="ChEBI" id="CHEBI:30616"/>
    </ligand>
</feature>
<feature type="binding site" evidence="1">
    <location>
        <position position="199"/>
    </location>
    <ligand>
        <name>Mg(2+)</name>
        <dbReference type="ChEBI" id="CHEBI:18420"/>
    </ligand>
</feature>
<feature type="binding site" evidence="1">
    <location>
        <position position="213"/>
    </location>
    <ligand>
        <name>Mg(2+)</name>
        <dbReference type="ChEBI" id="CHEBI:18420"/>
    </ligand>
</feature>
<feature type="binding site" evidence="1">
    <location>
        <position position="264"/>
    </location>
    <ligand>
        <name>substrate</name>
        <note>ligand shared with subunit alpha</note>
    </ligand>
</feature>
<feature type="binding site" evidence="1">
    <location>
        <begin position="321"/>
        <end position="323"/>
    </location>
    <ligand>
        <name>substrate</name>
        <note>ligand shared with subunit alpha</note>
    </ligand>
</feature>